<sequence>MNIAKIVREAREQSRLTTLDFATGIFDEFIQLHGDRSFRDDGAVVGGIGWLGDQAVTVVGIQKGKSLQDNLKRNFGQPHPEGYRKALRLMKHAEKFGRPVVTFINTAGAYPGVGAEERGQGEAIARNLMEMSDLKVPIIAIIIGEGGSGGALALAVADRVWMLENSIYAILSPEGFASILWKDGSRAMEAAELMKITSHELLEMDVVDKVISEVGLSSKELIKSVKKELQTELARLSQKPLEELLEERYQRFRKY</sequence>
<evidence type="ECO:0000255" key="1">
    <source>
        <dbReference type="HAMAP-Rule" id="MF_00823"/>
    </source>
</evidence>
<evidence type="ECO:0000255" key="2">
    <source>
        <dbReference type="PROSITE-ProRule" id="PRU01137"/>
    </source>
</evidence>
<gene>
    <name evidence="1" type="primary">accA</name>
    <name type="ordered locus">SPCG_0425</name>
</gene>
<dbReference type="EC" id="2.1.3.15" evidence="1"/>
<dbReference type="EMBL" id="CP001033">
    <property type="protein sequence ID" value="ACB89677.1"/>
    <property type="molecule type" value="Genomic_DNA"/>
</dbReference>
<dbReference type="RefSeq" id="WP_001017394.1">
    <property type="nucleotide sequence ID" value="NC_010582.1"/>
</dbReference>
<dbReference type="SMR" id="B2ILX2"/>
<dbReference type="KEGG" id="spw:SPCG_0425"/>
<dbReference type="HOGENOM" id="CLU_015486_0_2_9"/>
<dbReference type="UniPathway" id="UPA00655">
    <property type="reaction ID" value="UER00711"/>
</dbReference>
<dbReference type="GO" id="GO:0009317">
    <property type="term" value="C:acetyl-CoA carboxylase complex"/>
    <property type="evidence" value="ECO:0007669"/>
    <property type="project" value="InterPro"/>
</dbReference>
<dbReference type="GO" id="GO:0003989">
    <property type="term" value="F:acetyl-CoA carboxylase activity"/>
    <property type="evidence" value="ECO:0007669"/>
    <property type="project" value="InterPro"/>
</dbReference>
<dbReference type="GO" id="GO:0005524">
    <property type="term" value="F:ATP binding"/>
    <property type="evidence" value="ECO:0007669"/>
    <property type="project" value="UniProtKB-KW"/>
</dbReference>
<dbReference type="GO" id="GO:0016743">
    <property type="term" value="F:carboxyl- or carbamoyltransferase activity"/>
    <property type="evidence" value="ECO:0007669"/>
    <property type="project" value="UniProtKB-UniRule"/>
</dbReference>
<dbReference type="GO" id="GO:0006633">
    <property type="term" value="P:fatty acid biosynthetic process"/>
    <property type="evidence" value="ECO:0007669"/>
    <property type="project" value="UniProtKB-KW"/>
</dbReference>
<dbReference type="GO" id="GO:2001295">
    <property type="term" value="P:malonyl-CoA biosynthetic process"/>
    <property type="evidence" value="ECO:0007669"/>
    <property type="project" value="UniProtKB-UniRule"/>
</dbReference>
<dbReference type="Gene3D" id="3.90.226.10">
    <property type="entry name" value="2-enoyl-CoA Hydratase, Chain A, domain 1"/>
    <property type="match status" value="1"/>
</dbReference>
<dbReference type="HAMAP" id="MF_00823">
    <property type="entry name" value="AcetylCoA_CT_alpha"/>
    <property type="match status" value="1"/>
</dbReference>
<dbReference type="InterPro" id="IPR001095">
    <property type="entry name" value="Acetyl_CoA_COase_a_su"/>
</dbReference>
<dbReference type="InterPro" id="IPR029045">
    <property type="entry name" value="ClpP/crotonase-like_dom_sf"/>
</dbReference>
<dbReference type="InterPro" id="IPR011763">
    <property type="entry name" value="COA_CT_C"/>
</dbReference>
<dbReference type="NCBIfam" id="TIGR00513">
    <property type="entry name" value="accA"/>
    <property type="match status" value="1"/>
</dbReference>
<dbReference type="NCBIfam" id="NF041504">
    <property type="entry name" value="AccA_sub"/>
    <property type="match status" value="1"/>
</dbReference>
<dbReference type="NCBIfam" id="NF004344">
    <property type="entry name" value="PRK05724.1"/>
    <property type="match status" value="1"/>
</dbReference>
<dbReference type="NCBIfam" id="NF008971">
    <property type="entry name" value="PRK12319.1"/>
    <property type="match status" value="1"/>
</dbReference>
<dbReference type="PANTHER" id="PTHR42853">
    <property type="entry name" value="ACETYL-COENZYME A CARBOXYLASE CARBOXYL TRANSFERASE SUBUNIT ALPHA"/>
    <property type="match status" value="1"/>
</dbReference>
<dbReference type="PANTHER" id="PTHR42853:SF3">
    <property type="entry name" value="ACETYL-COENZYME A CARBOXYLASE CARBOXYL TRANSFERASE SUBUNIT ALPHA, CHLOROPLASTIC"/>
    <property type="match status" value="1"/>
</dbReference>
<dbReference type="Pfam" id="PF03255">
    <property type="entry name" value="ACCA"/>
    <property type="match status" value="1"/>
</dbReference>
<dbReference type="PRINTS" id="PR01069">
    <property type="entry name" value="ACCCTRFRASEA"/>
</dbReference>
<dbReference type="SUPFAM" id="SSF52096">
    <property type="entry name" value="ClpP/crotonase"/>
    <property type="match status" value="1"/>
</dbReference>
<dbReference type="PROSITE" id="PS50989">
    <property type="entry name" value="COA_CT_CTER"/>
    <property type="match status" value="1"/>
</dbReference>
<organism>
    <name type="scientific">Streptococcus pneumoniae (strain CGSP14)</name>
    <dbReference type="NCBI Taxonomy" id="516950"/>
    <lineage>
        <taxon>Bacteria</taxon>
        <taxon>Bacillati</taxon>
        <taxon>Bacillota</taxon>
        <taxon>Bacilli</taxon>
        <taxon>Lactobacillales</taxon>
        <taxon>Streptococcaceae</taxon>
        <taxon>Streptococcus</taxon>
    </lineage>
</organism>
<name>ACCA_STRPS</name>
<reference key="1">
    <citation type="journal article" date="2009" name="BMC Genomics">
        <title>Genome evolution driven by host adaptations results in a more virulent and antimicrobial-resistant Streptococcus pneumoniae serotype 14.</title>
        <authorList>
            <person name="Ding F."/>
            <person name="Tang P."/>
            <person name="Hsu M.-H."/>
            <person name="Cui P."/>
            <person name="Hu S."/>
            <person name="Yu J."/>
            <person name="Chiu C.-H."/>
        </authorList>
    </citation>
    <scope>NUCLEOTIDE SEQUENCE [LARGE SCALE GENOMIC DNA]</scope>
    <source>
        <strain>CGSP14</strain>
    </source>
</reference>
<keyword id="KW-0067">ATP-binding</keyword>
<keyword id="KW-0963">Cytoplasm</keyword>
<keyword id="KW-0275">Fatty acid biosynthesis</keyword>
<keyword id="KW-0276">Fatty acid metabolism</keyword>
<keyword id="KW-0444">Lipid biosynthesis</keyword>
<keyword id="KW-0443">Lipid metabolism</keyword>
<keyword id="KW-0547">Nucleotide-binding</keyword>
<keyword id="KW-0808">Transferase</keyword>
<accession>B2ILX2</accession>
<feature type="chain" id="PRO_1000134529" description="Acetyl-coenzyme A carboxylase carboxyl transferase subunit alpha">
    <location>
        <begin position="1"/>
        <end position="255"/>
    </location>
</feature>
<feature type="domain" description="CoA carboxyltransferase C-terminal" evidence="2">
    <location>
        <begin position="1"/>
        <end position="235"/>
    </location>
</feature>
<comment type="function">
    <text evidence="1">Component of the acetyl coenzyme A carboxylase (ACC) complex. First, biotin carboxylase catalyzes the carboxylation of biotin on its carrier protein (BCCP) and then the CO(2) group is transferred by the carboxyltransferase to acetyl-CoA to form malonyl-CoA.</text>
</comment>
<comment type="catalytic activity">
    <reaction evidence="1">
        <text>N(6)-carboxybiotinyl-L-lysyl-[protein] + acetyl-CoA = N(6)-biotinyl-L-lysyl-[protein] + malonyl-CoA</text>
        <dbReference type="Rhea" id="RHEA:54728"/>
        <dbReference type="Rhea" id="RHEA-COMP:10505"/>
        <dbReference type="Rhea" id="RHEA-COMP:10506"/>
        <dbReference type="ChEBI" id="CHEBI:57288"/>
        <dbReference type="ChEBI" id="CHEBI:57384"/>
        <dbReference type="ChEBI" id="CHEBI:83144"/>
        <dbReference type="ChEBI" id="CHEBI:83145"/>
        <dbReference type="EC" id="2.1.3.15"/>
    </reaction>
</comment>
<comment type="pathway">
    <text evidence="1">Lipid metabolism; malonyl-CoA biosynthesis; malonyl-CoA from acetyl-CoA: step 1/1.</text>
</comment>
<comment type="subunit">
    <text evidence="1">Acetyl-CoA carboxylase is a heterohexamer composed of biotin carboxyl carrier protein (AccB), biotin carboxylase (AccC) and two subunits each of ACCase subunit alpha (AccA) and ACCase subunit beta (AccD).</text>
</comment>
<comment type="subcellular location">
    <subcellularLocation>
        <location evidence="1">Cytoplasm</location>
    </subcellularLocation>
</comment>
<comment type="similarity">
    <text evidence="1">Belongs to the AccA family.</text>
</comment>
<protein>
    <recommendedName>
        <fullName evidence="1">Acetyl-coenzyme A carboxylase carboxyl transferase subunit alpha</fullName>
        <shortName evidence="1">ACCase subunit alpha</shortName>
        <shortName evidence="1">Acetyl-CoA carboxylase carboxyltransferase subunit alpha</shortName>
        <ecNumber evidence="1">2.1.3.15</ecNumber>
    </recommendedName>
</protein>
<proteinExistence type="inferred from homology"/>